<dbReference type="EC" id="5.4.99.-"/>
<dbReference type="EMBL" id="AL123456">
    <property type="protein sequence ID" value="CCP44477.1"/>
    <property type="molecule type" value="Genomic_DNA"/>
</dbReference>
<dbReference type="PIR" id="F70504">
    <property type="entry name" value="F70504"/>
</dbReference>
<dbReference type="RefSeq" id="NP_216227.1">
    <property type="nucleotide sequence ID" value="NC_000962.3"/>
</dbReference>
<dbReference type="RefSeq" id="WP_003408439.1">
    <property type="nucleotide sequence ID" value="NZ_NVQJ01000010.1"/>
</dbReference>
<dbReference type="SMR" id="P9WHQ1"/>
<dbReference type="FunCoup" id="P9WHQ1">
    <property type="interactions" value="162"/>
</dbReference>
<dbReference type="STRING" id="83332.Rv1711"/>
<dbReference type="PaxDb" id="83332-Rv1711"/>
<dbReference type="DNASU" id="885122"/>
<dbReference type="GeneID" id="885122"/>
<dbReference type="KEGG" id="mtu:Rv1711"/>
<dbReference type="KEGG" id="mtv:RVBD_1711"/>
<dbReference type="PATRIC" id="fig|83332.111.peg.1901"/>
<dbReference type="TubercuList" id="Rv1711"/>
<dbReference type="eggNOG" id="COG1187">
    <property type="taxonomic scope" value="Bacteria"/>
</dbReference>
<dbReference type="InParanoid" id="P9WHQ1"/>
<dbReference type="OrthoDB" id="9807213at2"/>
<dbReference type="PhylomeDB" id="P9WHQ1"/>
<dbReference type="Proteomes" id="UP000001584">
    <property type="component" value="Chromosome"/>
</dbReference>
<dbReference type="GO" id="GO:0003723">
    <property type="term" value="F:RNA binding"/>
    <property type="evidence" value="ECO:0007669"/>
    <property type="project" value="UniProtKB-KW"/>
</dbReference>
<dbReference type="GO" id="GO:0120159">
    <property type="term" value="F:rRNA pseudouridine synthase activity"/>
    <property type="evidence" value="ECO:0007669"/>
    <property type="project" value="UniProtKB-ARBA"/>
</dbReference>
<dbReference type="GO" id="GO:0000455">
    <property type="term" value="P:enzyme-directed rRNA pseudouridine synthesis"/>
    <property type="evidence" value="ECO:0007669"/>
    <property type="project" value="UniProtKB-ARBA"/>
</dbReference>
<dbReference type="CDD" id="cd02870">
    <property type="entry name" value="PseudoU_synth_RsuA_like"/>
    <property type="match status" value="1"/>
</dbReference>
<dbReference type="CDD" id="cd00165">
    <property type="entry name" value="S4"/>
    <property type="match status" value="1"/>
</dbReference>
<dbReference type="FunFam" id="3.10.290.10:FF:000003">
    <property type="entry name" value="Pseudouridine synthase"/>
    <property type="match status" value="1"/>
</dbReference>
<dbReference type="Gene3D" id="3.30.70.1560">
    <property type="entry name" value="Alpha-L RNA-binding motif"/>
    <property type="match status" value="1"/>
</dbReference>
<dbReference type="Gene3D" id="3.30.70.580">
    <property type="entry name" value="Pseudouridine synthase I, catalytic domain, N-terminal subdomain"/>
    <property type="match status" value="1"/>
</dbReference>
<dbReference type="Gene3D" id="3.10.290.10">
    <property type="entry name" value="RNA-binding S4 domain"/>
    <property type="match status" value="1"/>
</dbReference>
<dbReference type="InterPro" id="IPR042092">
    <property type="entry name" value="PsdUridine_s_RsuA/RluB/E/F_cat"/>
</dbReference>
<dbReference type="InterPro" id="IPR020103">
    <property type="entry name" value="PsdUridine_synth_cat_dom_sf"/>
</dbReference>
<dbReference type="InterPro" id="IPR006145">
    <property type="entry name" value="PsdUridine_synth_RsuA/RluA"/>
</dbReference>
<dbReference type="InterPro" id="IPR000748">
    <property type="entry name" value="PsdUridine_synth_RsuA/RluB/E/F"/>
</dbReference>
<dbReference type="InterPro" id="IPR018496">
    <property type="entry name" value="PsdUridine_synth_RsuA/RluB_CS"/>
</dbReference>
<dbReference type="InterPro" id="IPR050343">
    <property type="entry name" value="RsuA_PseudoU_synthase"/>
</dbReference>
<dbReference type="InterPro" id="IPR002942">
    <property type="entry name" value="S4_RNA-bd"/>
</dbReference>
<dbReference type="InterPro" id="IPR036986">
    <property type="entry name" value="S4_RNA-bd_sf"/>
</dbReference>
<dbReference type="InterPro" id="IPR020094">
    <property type="entry name" value="TruA/RsuA/RluB/E/F_N"/>
</dbReference>
<dbReference type="NCBIfam" id="TIGR00093">
    <property type="entry name" value="pseudouridine synthase"/>
    <property type="match status" value="1"/>
</dbReference>
<dbReference type="PANTHER" id="PTHR47683">
    <property type="entry name" value="PSEUDOURIDINE SYNTHASE FAMILY PROTEIN-RELATED"/>
    <property type="match status" value="1"/>
</dbReference>
<dbReference type="PANTHER" id="PTHR47683:SF2">
    <property type="entry name" value="RNA-BINDING S4 DOMAIN-CONTAINING PROTEIN"/>
    <property type="match status" value="1"/>
</dbReference>
<dbReference type="Pfam" id="PF00849">
    <property type="entry name" value="PseudoU_synth_2"/>
    <property type="match status" value="1"/>
</dbReference>
<dbReference type="Pfam" id="PF01479">
    <property type="entry name" value="S4"/>
    <property type="match status" value="1"/>
</dbReference>
<dbReference type="SMART" id="SM00363">
    <property type="entry name" value="S4"/>
    <property type="match status" value="1"/>
</dbReference>
<dbReference type="SUPFAM" id="SSF55174">
    <property type="entry name" value="Alpha-L RNA-binding motif"/>
    <property type="match status" value="1"/>
</dbReference>
<dbReference type="SUPFAM" id="SSF55120">
    <property type="entry name" value="Pseudouridine synthase"/>
    <property type="match status" value="1"/>
</dbReference>
<dbReference type="PROSITE" id="PS01149">
    <property type="entry name" value="PSI_RSU"/>
    <property type="match status" value="1"/>
</dbReference>
<dbReference type="PROSITE" id="PS50889">
    <property type="entry name" value="S4"/>
    <property type="match status" value="1"/>
</dbReference>
<gene>
    <name type="ordered locus">Rv1711</name>
    <name type="ORF">MTCI125.33</name>
</gene>
<reference key="1">
    <citation type="journal article" date="1998" name="Nature">
        <title>Deciphering the biology of Mycobacterium tuberculosis from the complete genome sequence.</title>
        <authorList>
            <person name="Cole S.T."/>
            <person name="Brosch R."/>
            <person name="Parkhill J."/>
            <person name="Garnier T."/>
            <person name="Churcher C.M."/>
            <person name="Harris D.E."/>
            <person name="Gordon S.V."/>
            <person name="Eiglmeier K."/>
            <person name="Gas S."/>
            <person name="Barry C.E. III"/>
            <person name="Tekaia F."/>
            <person name="Badcock K."/>
            <person name="Basham D."/>
            <person name="Brown D."/>
            <person name="Chillingworth T."/>
            <person name="Connor R."/>
            <person name="Davies R.M."/>
            <person name="Devlin K."/>
            <person name="Feltwell T."/>
            <person name="Gentles S."/>
            <person name="Hamlin N."/>
            <person name="Holroyd S."/>
            <person name="Hornsby T."/>
            <person name="Jagels K."/>
            <person name="Krogh A."/>
            <person name="McLean J."/>
            <person name="Moule S."/>
            <person name="Murphy L.D."/>
            <person name="Oliver S."/>
            <person name="Osborne J."/>
            <person name="Quail M.A."/>
            <person name="Rajandream M.A."/>
            <person name="Rogers J."/>
            <person name="Rutter S."/>
            <person name="Seeger K."/>
            <person name="Skelton S."/>
            <person name="Squares S."/>
            <person name="Squares R."/>
            <person name="Sulston J.E."/>
            <person name="Taylor K."/>
            <person name="Whitehead S."/>
            <person name="Barrell B.G."/>
        </authorList>
    </citation>
    <scope>NUCLEOTIDE SEQUENCE [LARGE SCALE GENOMIC DNA]</scope>
    <source>
        <strain>ATCC 25618 / H37Rv</strain>
    </source>
</reference>
<reference key="2">
    <citation type="journal article" date="2008" name="BMC Syst. Biol.">
        <title>targetTB: a target identification pipeline for Mycobacterium tuberculosis through an interactome, reactome and genome-scale structural analysis.</title>
        <authorList>
            <person name="Raman K."/>
            <person name="Yeturu K."/>
            <person name="Chandra N."/>
        </authorList>
    </citation>
    <scope>IDENTIFICATION AS A DRUG TARGET [LARGE SCALE ANALYSIS]</scope>
</reference>
<reference key="3">
    <citation type="journal article" date="2011" name="Mol. Cell. Proteomics">
        <title>Proteogenomic analysis of Mycobacterium tuberculosis by high resolution mass spectrometry.</title>
        <authorList>
            <person name="Kelkar D.S."/>
            <person name="Kumar D."/>
            <person name="Kumar P."/>
            <person name="Balakrishnan L."/>
            <person name="Muthusamy B."/>
            <person name="Yadav A.K."/>
            <person name="Shrivastava P."/>
            <person name="Marimuthu A."/>
            <person name="Anand S."/>
            <person name="Sundaram H."/>
            <person name="Kingsbury R."/>
            <person name="Harsha H.C."/>
            <person name="Nair B."/>
            <person name="Prasad T.S."/>
            <person name="Chauhan D.S."/>
            <person name="Katoch K."/>
            <person name="Katoch V.M."/>
            <person name="Kumar P."/>
            <person name="Chaerkady R."/>
            <person name="Ramachandran S."/>
            <person name="Dash D."/>
            <person name="Pandey A."/>
        </authorList>
    </citation>
    <scope>IDENTIFICATION BY MASS SPECTROMETRY [LARGE SCALE ANALYSIS]</scope>
    <source>
        <strain>ATCC 25618 / H37Rv</strain>
    </source>
</reference>
<feature type="chain" id="PRO_0000100029" description="Uncharacterized RNA pseudouridine synthase Rv1711">
    <location>
        <begin position="1"/>
        <end position="254"/>
    </location>
</feature>
<feature type="domain" description="S4 RNA-binding" evidence="2">
    <location>
        <begin position="14"/>
        <end position="81"/>
    </location>
</feature>
<feature type="active site" description="Nucleophile" evidence="1">
    <location>
        <position position="119"/>
    </location>
</feature>
<sequence length="254" mass="27597">MMAEPEESREPRGIRLQKVLSQAGIASRRAAEKMIVDGRVEVDGHVVTELGTRVDPQVAVVRVDGARVVLDDSLVYLALNKPRGMHSTMSDDRGRPCIGDLIERKVRGTKKLFHVGRLDADTEGLMLLTNDGELAHRLMHPSHEVPKTYLATVTGSVPRGLGRTLRAGIELDDGPAFVDDFAVVDAIPGKTLVRVTLHEGRNRIVRRLLAAAGFPVEALVRTDIGAVSLGKQRPGSVRALRSNEIGQLYQAVGL</sequence>
<organism>
    <name type="scientific">Mycobacterium tuberculosis (strain ATCC 25618 / H37Rv)</name>
    <dbReference type="NCBI Taxonomy" id="83332"/>
    <lineage>
        <taxon>Bacteria</taxon>
        <taxon>Bacillati</taxon>
        <taxon>Actinomycetota</taxon>
        <taxon>Actinomycetes</taxon>
        <taxon>Mycobacteriales</taxon>
        <taxon>Mycobacteriaceae</taxon>
        <taxon>Mycobacterium</taxon>
        <taxon>Mycobacterium tuberculosis complex</taxon>
    </lineage>
</organism>
<protein>
    <recommendedName>
        <fullName>Uncharacterized RNA pseudouridine synthase Rv1711</fullName>
        <ecNumber>5.4.99.-</ecNumber>
    </recommendedName>
    <alternativeName>
        <fullName>RNA pseudouridylate synthase</fullName>
    </alternativeName>
    <alternativeName>
        <fullName>RNA-uridine isomerase</fullName>
    </alternativeName>
</protein>
<accession>P9WHQ1</accession>
<accession>L0T7P5</accession>
<accession>O33210</accession>
<accession>P65842</accession>
<comment type="catalytic activity">
    <reaction>
        <text>a uridine in RNA = a pseudouridine in RNA</text>
        <dbReference type="Rhea" id="RHEA:48348"/>
        <dbReference type="Rhea" id="RHEA-COMP:12068"/>
        <dbReference type="Rhea" id="RHEA-COMP:12069"/>
        <dbReference type="ChEBI" id="CHEBI:65314"/>
        <dbReference type="ChEBI" id="CHEBI:65315"/>
    </reaction>
</comment>
<comment type="miscellaneous">
    <text>Was identified as a high-confidence drug target.</text>
</comment>
<comment type="similarity">
    <text evidence="3">Belongs to the pseudouridine synthase RsuA family.</text>
</comment>
<name>Y1711_MYCTU</name>
<evidence type="ECO:0000250" key="1"/>
<evidence type="ECO:0000255" key="2">
    <source>
        <dbReference type="PROSITE-ProRule" id="PRU00182"/>
    </source>
</evidence>
<evidence type="ECO:0000305" key="3"/>
<keyword id="KW-0413">Isomerase</keyword>
<keyword id="KW-1185">Reference proteome</keyword>
<keyword id="KW-0694">RNA-binding</keyword>
<proteinExistence type="evidence at protein level"/>